<comment type="function">
    <text evidence="1">Molecular chaperone; binds unfolded polypeptides in vitro, and has a weak ATPase activity.</text>
</comment>
<comment type="subunit">
    <text evidence="1">Forms an oligomeric complex of eight-membered rings.</text>
</comment>
<comment type="similarity">
    <text evidence="2">Belongs to the TCP-1 chaperonin family.</text>
</comment>
<name>THS_METJA</name>
<accession>Q58405</accession>
<gene>
    <name type="primary">ths</name>
    <name type="ordered locus">MJ0999</name>
</gene>
<keyword id="KW-0067">ATP-binding</keyword>
<keyword id="KW-0143">Chaperone</keyword>
<keyword id="KW-0547">Nucleotide-binding</keyword>
<keyword id="KW-1185">Reference proteome</keyword>
<evidence type="ECO:0000250" key="1"/>
<evidence type="ECO:0000305" key="2"/>
<proteinExistence type="inferred from homology"/>
<dbReference type="EMBL" id="L77117">
    <property type="protein sequence ID" value="AAB99002.1"/>
    <property type="molecule type" value="Genomic_DNA"/>
</dbReference>
<dbReference type="PIR" id="F64424">
    <property type="entry name" value="F64424"/>
</dbReference>
<dbReference type="RefSeq" id="WP_010870512.1">
    <property type="nucleotide sequence ID" value="NC_000909.1"/>
</dbReference>
<dbReference type="SMR" id="Q58405"/>
<dbReference type="FunCoup" id="Q58405">
    <property type="interactions" value="228"/>
</dbReference>
<dbReference type="STRING" id="243232.MJ_0999"/>
<dbReference type="PaxDb" id="243232-MJ_0999"/>
<dbReference type="EnsemblBacteria" id="AAB99002">
    <property type="protein sequence ID" value="AAB99002"/>
    <property type="gene ID" value="MJ_0999"/>
</dbReference>
<dbReference type="GeneID" id="1451896"/>
<dbReference type="KEGG" id="mja:MJ_0999"/>
<dbReference type="eggNOG" id="arCOG01257">
    <property type="taxonomic scope" value="Archaea"/>
</dbReference>
<dbReference type="HOGENOM" id="CLU_008891_7_3_2"/>
<dbReference type="InParanoid" id="Q58405"/>
<dbReference type="OrthoDB" id="9362at2157"/>
<dbReference type="PhylomeDB" id="Q58405"/>
<dbReference type="Proteomes" id="UP000000805">
    <property type="component" value="Chromosome"/>
</dbReference>
<dbReference type="GO" id="GO:0005524">
    <property type="term" value="F:ATP binding"/>
    <property type="evidence" value="ECO:0007669"/>
    <property type="project" value="UniProtKB-KW"/>
</dbReference>
<dbReference type="GO" id="GO:0016887">
    <property type="term" value="F:ATP hydrolysis activity"/>
    <property type="evidence" value="ECO:0007669"/>
    <property type="project" value="InterPro"/>
</dbReference>
<dbReference type="GO" id="GO:0140662">
    <property type="term" value="F:ATP-dependent protein folding chaperone"/>
    <property type="evidence" value="ECO:0007669"/>
    <property type="project" value="InterPro"/>
</dbReference>
<dbReference type="GO" id="GO:0051082">
    <property type="term" value="F:unfolded protein binding"/>
    <property type="evidence" value="ECO:0000318"/>
    <property type="project" value="GO_Central"/>
</dbReference>
<dbReference type="GO" id="GO:0006457">
    <property type="term" value="P:protein folding"/>
    <property type="evidence" value="ECO:0000318"/>
    <property type="project" value="GO_Central"/>
</dbReference>
<dbReference type="CDD" id="cd03343">
    <property type="entry name" value="cpn60"/>
    <property type="match status" value="1"/>
</dbReference>
<dbReference type="FunFam" id="1.10.560.10:FF:000017">
    <property type="entry name" value="T-complex protein 1 subunit eta"/>
    <property type="match status" value="1"/>
</dbReference>
<dbReference type="FunFam" id="3.50.7.10:FF:000014">
    <property type="entry name" value="Thermosome subunit"/>
    <property type="match status" value="1"/>
</dbReference>
<dbReference type="Gene3D" id="3.50.7.10">
    <property type="entry name" value="GroEL"/>
    <property type="match status" value="1"/>
</dbReference>
<dbReference type="Gene3D" id="1.10.560.10">
    <property type="entry name" value="GroEL-like equatorial domain"/>
    <property type="match status" value="1"/>
</dbReference>
<dbReference type="Gene3D" id="3.30.260.10">
    <property type="entry name" value="TCP-1-like chaperonin intermediate domain"/>
    <property type="match status" value="1"/>
</dbReference>
<dbReference type="InterPro" id="IPR017998">
    <property type="entry name" value="Chaperone_TCP-1"/>
</dbReference>
<dbReference type="InterPro" id="IPR002194">
    <property type="entry name" value="Chaperonin_TCP-1_CS"/>
</dbReference>
<dbReference type="InterPro" id="IPR002423">
    <property type="entry name" value="Cpn60/GroEL/TCP-1"/>
</dbReference>
<dbReference type="InterPro" id="IPR027409">
    <property type="entry name" value="GroEL-like_apical_dom_sf"/>
</dbReference>
<dbReference type="InterPro" id="IPR027413">
    <property type="entry name" value="GROEL-like_equatorial_sf"/>
</dbReference>
<dbReference type="InterPro" id="IPR027410">
    <property type="entry name" value="TCP-1-like_intermed_sf"/>
</dbReference>
<dbReference type="InterPro" id="IPR053374">
    <property type="entry name" value="TCP-1_chaperonin"/>
</dbReference>
<dbReference type="InterPro" id="IPR054827">
    <property type="entry name" value="thermosome_alpha"/>
</dbReference>
<dbReference type="InterPro" id="IPR012714">
    <property type="entry name" value="Thermosome_arc"/>
</dbReference>
<dbReference type="NCBIfam" id="NF041082">
    <property type="entry name" value="thermosome_alpha"/>
    <property type="match status" value="1"/>
</dbReference>
<dbReference type="NCBIfam" id="TIGR02339">
    <property type="entry name" value="thermosome_arch"/>
    <property type="match status" value="1"/>
</dbReference>
<dbReference type="NCBIfam" id="NF041083">
    <property type="entry name" value="thermosome_beta"/>
    <property type="match status" value="1"/>
</dbReference>
<dbReference type="PANTHER" id="PTHR11353">
    <property type="entry name" value="CHAPERONIN"/>
    <property type="match status" value="1"/>
</dbReference>
<dbReference type="Pfam" id="PF00118">
    <property type="entry name" value="Cpn60_TCP1"/>
    <property type="match status" value="1"/>
</dbReference>
<dbReference type="PRINTS" id="PR00304">
    <property type="entry name" value="TCOMPLEXTCP1"/>
</dbReference>
<dbReference type="SUPFAM" id="SSF52029">
    <property type="entry name" value="GroEL apical domain-like"/>
    <property type="match status" value="1"/>
</dbReference>
<dbReference type="SUPFAM" id="SSF48592">
    <property type="entry name" value="GroEL equatorial domain-like"/>
    <property type="match status" value="1"/>
</dbReference>
<dbReference type="SUPFAM" id="SSF54849">
    <property type="entry name" value="GroEL-intermediate domain like"/>
    <property type="match status" value="1"/>
</dbReference>
<dbReference type="PROSITE" id="PS00750">
    <property type="entry name" value="TCP1_1"/>
    <property type="match status" value="1"/>
</dbReference>
<dbReference type="PROSITE" id="PS00751">
    <property type="entry name" value="TCP1_2"/>
    <property type="match status" value="1"/>
</dbReference>
<dbReference type="PROSITE" id="PS00995">
    <property type="entry name" value="TCP1_3"/>
    <property type="match status" value="1"/>
</dbReference>
<organism>
    <name type="scientific">Methanocaldococcus jannaschii (strain ATCC 43067 / DSM 2661 / JAL-1 / JCM 10045 / NBRC 100440)</name>
    <name type="common">Methanococcus jannaschii</name>
    <dbReference type="NCBI Taxonomy" id="243232"/>
    <lineage>
        <taxon>Archaea</taxon>
        <taxon>Methanobacteriati</taxon>
        <taxon>Methanobacteriota</taxon>
        <taxon>Methanomada group</taxon>
        <taxon>Methanococci</taxon>
        <taxon>Methanococcales</taxon>
        <taxon>Methanocaldococcaceae</taxon>
        <taxon>Methanocaldococcus</taxon>
    </lineage>
</organism>
<sequence>MAMAGAPIVVLPQNVKRYVGRDAQRMNILAGRIIAETVRTTLGPKGMDKMLVDELGDIVVTNDGVTILKEMSVEHPAAKMLIEVAKTQEKEVGDGTTTAVVIAGELLRKAEELLDQNIHPSVIINGYEMARNKAVEELKSIAKEVKPEDTEMLKKIAMTSITGKGAEKAREQLAEIVVEAVRAVVDEETGKVDKDLIKVEKKEGAPIEETKLIRGVVIDKERVNPQMPKKVENAKIALLNCPIEVKETETDAEIRITDPAKLMEFIEQEEKMIKDMVEKIAATGANVVFCQKGIDDLAQHYLAKKGILAVRRVKKSDMEKLAKATGARIVTKIDDLTPEDLGEAGLVEERKVAGDAMIFVEQCKHPKAVTILARGSTEHVVEEVARAIDDAIGVVKCALEEGKIVAGGGATEIELAKRLRKFAESVAGREQLAVKAFADALEVIPRTLAENSGLDPIDMLVKLRAAHEKEGGEVYGLDVFEGEVVDMLEKGVVEPLKVKTQAIDSATEASVMLLRIDDVIAAEKVKGDEKGGEGGDMGGDEF</sequence>
<feature type="chain" id="PRO_0000128390" description="Thermosome subunit">
    <location>
        <begin position="1"/>
        <end position="542"/>
    </location>
</feature>
<reference key="1">
    <citation type="journal article" date="1996" name="Science">
        <title>Complete genome sequence of the methanogenic archaeon, Methanococcus jannaschii.</title>
        <authorList>
            <person name="Bult C.J."/>
            <person name="White O."/>
            <person name="Olsen G.J."/>
            <person name="Zhou L."/>
            <person name="Fleischmann R.D."/>
            <person name="Sutton G.G."/>
            <person name="Blake J.A."/>
            <person name="FitzGerald L.M."/>
            <person name="Clayton R.A."/>
            <person name="Gocayne J.D."/>
            <person name="Kerlavage A.R."/>
            <person name="Dougherty B.A."/>
            <person name="Tomb J.-F."/>
            <person name="Adams M.D."/>
            <person name="Reich C.I."/>
            <person name="Overbeek R."/>
            <person name="Kirkness E.F."/>
            <person name="Weinstock K.G."/>
            <person name="Merrick J.M."/>
            <person name="Glodek A."/>
            <person name="Scott J.L."/>
            <person name="Geoghagen N.S.M."/>
            <person name="Weidman J.F."/>
            <person name="Fuhrmann J.L."/>
            <person name="Nguyen D."/>
            <person name="Utterback T.R."/>
            <person name="Kelley J.M."/>
            <person name="Peterson J.D."/>
            <person name="Sadow P.W."/>
            <person name="Hanna M.C."/>
            <person name="Cotton M.D."/>
            <person name="Roberts K.M."/>
            <person name="Hurst M.A."/>
            <person name="Kaine B.P."/>
            <person name="Borodovsky M."/>
            <person name="Klenk H.-P."/>
            <person name="Fraser C.M."/>
            <person name="Smith H.O."/>
            <person name="Woese C.R."/>
            <person name="Venter J.C."/>
        </authorList>
    </citation>
    <scope>NUCLEOTIDE SEQUENCE [LARGE SCALE GENOMIC DNA]</scope>
    <source>
        <strain>ATCC 43067 / DSM 2661 / JAL-1 / JCM 10045 / NBRC 100440</strain>
    </source>
</reference>
<protein>
    <recommendedName>
        <fullName>Thermosome subunit</fullName>
    </recommendedName>
    <alternativeName>
        <fullName>Chaperonin subunit</fullName>
    </alternativeName>
</protein>